<comment type="function">
    <text>Forms pores that allow passive diffusion of small molecules across the outer membrane.</text>
</comment>
<comment type="subunit">
    <text evidence="1">Homotrimer.</text>
</comment>
<comment type="subcellular location">
    <subcellularLocation>
        <location>Cell outer membrane</location>
        <topology>Multi-pass membrane protein</topology>
    </subcellularLocation>
</comment>
<comment type="similarity">
    <text evidence="2">Belongs to the Gram-negative porin family.</text>
</comment>
<protein>
    <recommendedName>
        <fullName>Outer membrane porin C</fullName>
    </recommendedName>
    <alternativeName>
        <fullName>Outer membrane protein C</fullName>
    </alternativeName>
    <alternativeName>
        <fullName>Porin OmpC</fullName>
    </alternativeName>
</protein>
<accession>P0A263</accession>
<accession>O52503</accession>
<accession>P09878</accession>
<proteinExistence type="inferred from homology"/>
<gene>
    <name type="primary">ompC</name>
    <name type="ordered locus">STM2267</name>
</gene>
<sequence length="378" mass="41239">MKVKVLSLLVPALLVAGAANAAEIYNKDGNKLDLFGKVDGLHYFSDDKGSDGDQTYMRIGFKGETQVNDQLTGYGQWEYQIQGNQTEGSNDSWTRVAFAGLKFADAGSFDYGRNYGVTYDVTSWTDVLPEFGGDTYGADNFMQQRGNGYATYRNTDFFGLVDGLDFALQYQGKNGSVSGENTNGRSLLNQNGDGYGGSLTYAIGEGFSVGGAITTSKRTADQNNTANARLYGNGDRATVYTGGLKYDANNIYLAAQYSQTYNATRFGTSNGSNPSTSYGFANKAQNFEVVAQYQFDFGLRPSVAYLQSKGKDISNGYGASYGDQDIVKYVDVGATYYFNKNMSTYVDYKINLLDKNDFTRDAGINTDDIVALGLVYQF</sequence>
<keyword id="KW-0998">Cell outer membrane</keyword>
<keyword id="KW-0406">Ion transport</keyword>
<keyword id="KW-0472">Membrane</keyword>
<keyword id="KW-0626">Porin</keyword>
<keyword id="KW-1185">Reference proteome</keyword>
<keyword id="KW-0732">Signal</keyword>
<keyword id="KW-0812">Transmembrane</keyword>
<keyword id="KW-1134">Transmembrane beta strand</keyword>
<keyword id="KW-0813">Transport</keyword>
<feature type="signal peptide" evidence="1">
    <location>
        <begin position="1"/>
        <end position="21"/>
    </location>
</feature>
<feature type="chain" id="PRO_0000025235" description="Outer membrane porin C">
    <location>
        <begin position="22"/>
        <end position="378"/>
    </location>
</feature>
<feature type="sequence conflict" description="In Ref. 1; AAB96675." evidence="2" ref="1">
    <original>H</original>
    <variation>N</variation>
    <location>
        <position position="42"/>
    </location>
</feature>
<feature type="sequence conflict" description="In Ref. 1; AAB96675." evidence="2" ref="1">
    <original>N</original>
    <variation>D</variation>
    <location>
        <position position="223"/>
    </location>
</feature>
<feature type="sequence conflict" description="In Ref. 1; AAB96675." evidence="2" ref="1">
    <original>L</original>
    <variation>V</variation>
    <location>
        <position position="253"/>
    </location>
</feature>
<feature type="sequence conflict" description="In Ref. 1; AAB96675." evidence="2" ref="1">
    <original>S</original>
    <variation>F</variation>
    <location>
        <position position="258"/>
    </location>
</feature>
<feature type="sequence conflict" description="In Ref. 1; AAB96675." evidence="2" ref="1">
    <original>K</original>
    <variation>T</variation>
    <location>
        <position position="340"/>
    </location>
</feature>
<feature type="sequence conflict" description="In Ref. 1; AAB96675." evidence="2" ref="1">
    <original>ND</original>
    <variation>YE</variation>
    <location>
        <begin position="356"/>
        <end position="357"/>
    </location>
</feature>
<reference key="1">
    <citation type="journal article" date="1999" name="Can. J. Microbiol.">
        <title>The porin OmpC of Salmonella typhimurium mediates adherence to macrophages.</title>
        <authorList>
            <person name="Negm R.S."/>
            <person name="Pistole T.G."/>
        </authorList>
    </citation>
    <scope>NUCLEOTIDE SEQUENCE [GENOMIC DNA]</scope>
    <source>
        <strain>ATCC 14028 / SGSG 2980 / CDC 6516-60 / NCTC 12023</strain>
    </source>
</reference>
<reference key="2">
    <citation type="journal article" date="2001" name="Nature">
        <title>Complete genome sequence of Salmonella enterica serovar Typhimurium LT2.</title>
        <authorList>
            <person name="McClelland M."/>
            <person name="Sanderson K.E."/>
            <person name="Spieth J."/>
            <person name="Clifton S.W."/>
            <person name="Latreille P."/>
            <person name="Courtney L."/>
            <person name="Porwollik S."/>
            <person name="Ali J."/>
            <person name="Dante M."/>
            <person name="Du F."/>
            <person name="Hou S."/>
            <person name="Layman D."/>
            <person name="Leonard S."/>
            <person name="Nguyen C."/>
            <person name="Scott K."/>
            <person name="Holmes A."/>
            <person name="Grewal N."/>
            <person name="Mulvaney E."/>
            <person name="Ryan E."/>
            <person name="Sun H."/>
            <person name="Florea L."/>
            <person name="Miller W."/>
            <person name="Stoneking T."/>
            <person name="Nhan M."/>
            <person name="Waterston R."/>
            <person name="Wilson R.K."/>
        </authorList>
    </citation>
    <scope>NUCLEOTIDE SEQUENCE [LARGE SCALE GENOMIC DNA]</scope>
    <source>
        <strain>LT2 / SGSC1412 / ATCC 700720</strain>
    </source>
</reference>
<evidence type="ECO:0000250" key="1"/>
<evidence type="ECO:0000305" key="2"/>
<dbReference type="EMBL" id="AF039309">
    <property type="protein sequence ID" value="AAB96675.1"/>
    <property type="molecule type" value="Genomic_DNA"/>
</dbReference>
<dbReference type="EMBL" id="AE006468">
    <property type="protein sequence ID" value="AAL21169.1"/>
    <property type="molecule type" value="Genomic_DNA"/>
</dbReference>
<dbReference type="EMBL" id="M31424">
    <property type="protein sequence ID" value="AAA27169.1"/>
    <property type="molecule type" value="Genomic_DNA"/>
</dbReference>
<dbReference type="PIR" id="A59139">
    <property type="entry name" value="A59139"/>
</dbReference>
<dbReference type="RefSeq" id="NP_461210.1">
    <property type="nucleotide sequence ID" value="NC_003197.2"/>
</dbReference>
<dbReference type="RefSeq" id="WP_000865526.1">
    <property type="nucleotide sequence ID" value="NC_003197.2"/>
</dbReference>
<dbReference type="SMR" id="P0A263"/>
<dbReference type="STRING" id="99287.STM2267"/>
<dbReference type="PaxDb" id="99287-STM2267"/>
<dbReference type="GeneID" id="1253789"/>
<dbReference type="KEGG" id="stm:STM2267"/>
<dbReference type="PATRIC" id="fig|99287.12.peg.2401"/>
<dbReference type="HOGENOM" id="CLU_058202_0_0_6"/>
<dbReference type="OMA" id="MQQRANG"/>
<dbReference type="PhylomeDB" id="P0A263"/>
<dbReference type="BioCyc" id="SENT99287:STM2267-MONOMER"/>
<dbReference type="Proteomes" id="UP000001014">
    <property type="component" value="Chromosome"/>
</dbReference>
<dbReference type="GO" id="GO:0009279">
    <property type="term" value="C:cell outer membrane"/>
    <property type="evidence" value="ECO:0007669"/>
    <property type="project" value="UniProtKB-SubCell"/>
</dbReference>
<dbReference type="GO" id="GO:0046930">
    <property type="term" value="C:pore complex"/>
    <property type="evidence" value="ECO:0000318"/>
    <property type="project" value="GO_Central"/>
</dbReference>
<dbReference type="GO" id="GO:0015288">
    <property type="term" value="F:porin activity"/>
    <property type="evidence" value="ECO:0000318"/>
    <property type="project" value="GO_Central"/>
</dbReference>
<dbReference type="GO" id="GO:0034220">
    <property type="term" value="P:monoatomic ion transmembrane transport"/>
    <property type="evidence" value="ECO:0007669"/>
    <property type="project" value="InterPro"/>
</dbReference>
<dbReference type="Gene3D" id="2.40.160.10">
    <property type="entry name" value="Porin"/>
    <property type="match status" value="1"/>
</dbReference>
<dbReference type="InterPro" id="IPR050298">
    <property type="entry name" value="Gram-neg_bact_OMP"/>
</dbReference>
<dbReference type="InterPro" id="IPR023614">
    <property type="entry name" value="Porin_dom_sf"/>
</dbReference>
<dbReference type="InterPro" id="IPR001897">
    <property type="entry name" value="Porin_gammaproteobac"/>
</dbReference>
<dbReference type="InterPro" id="IPR001702">
    <property type="entry name" value="Porin_Gram-ve"/>
</dbReference>
<dbReference type="InterPro" id="IPR013793">
    <property type="entry name" value="Porin_Gram-ve_CS"/>
</dbReference>
<dbReference type="NCBIfam" id="NF007841">
    <property type="entry name" value="PRK10554.1"/>
    <property type="match status" value="1"/>
</dbReference>
<dbReference type="PANTHER" id="PTHR34501:SF1">
    <property type="entry name" value="OUTER MEMBRANE PORIN C"/>
    <property type="match status" value="1"/>
</dbReference>
<dbReference type="PANTHER" id="PTHR34501">
    <property type="entry name" value="PROTEIN YDDL-RELATED"/>
    <property type="match status" value="1"/>
</dbReference>
<dbReference type="Pfam" id="PF00267">
    <property type="entry name" value="Porin_1"/>
    <property type="match status" value="1"/>
</dbReference>
<dbReference type="PRINTS" id="PR00183">
    <property type="entry name" value="ECOLIPORIN"/>
</dbReference>
<dbReference type="PRINTS" id="PR00182">
    <property type="entry name" value="ECOLNEIPORIN"/>
</dbReference>
<dbReference type="SUPFAM" id="SSF56935">
    <property type="entry name" value="Porins"/>
    <property type="match status" value="1"/>
</dbReference>
<dbReference type="PROSITE" id="PS00576">
    <property type="entry name" value="GRAM_NEG_PORIN"/>
    <property type="match status" value="1"/>
</dbReference>
<name>OMPC_SALTY</name>
<organism>
    <name type="scientific">Salmonella typhimurium (strain LT2 / SGSC1412 / ATCC 700720)</name>
    <dbReference type="NCBI Taxonomy" id="99287"/>
    <lineage>
        <taxon>Bacteria</taxon>
        <taxon>Pseudomonadati</taxon>
        <taxon>Pseudomonadota</taxon>
        <taxon>Gammaproteobacteria</taxon>
        <taxon>Enterobacterales</taxon>
        <taxon>Enterobacteriaceae</taxon>
        <taxon>Salmonella</taxon>
    </lineage>
</organism>